<gene>
    <name evidence="1" type="primary">mdtD</name>
    <name type="ordered locus">SbBS512_E1156</name>
</gene>
<organism>
    <name type="scientific">Shigella boydii serotype 18 (strain CDC 3083-94 / BS512)</name>
    <dbReference type="NCBI Taxonomy" id="344609"/>
    <lineage>
        <taxon>Bacteria</taxon>
        <taxon>Pseudomonadati</taxon>
        <taxon>Pseudomonadota</taxon>
        <taxon>Gammaproteobacteria</taxon>
        <taxon>Enterobacterales</taxon>
        <taxon>Enterobacteriaceae</taxon>
        <taxon>Shigella</taxon>
    </lineage>
</organism>
<keyword id="KW-0997">Cell inner membrane</keyword>
<keyword id="KW-1003">Cell membrane</keyword>
<keyword id="KW-0472">Membrane</keyword>
<keyword id="KW-1185">Reference proteome</keyword>
<keyword id="KW-0812">Transmembrane</keyword>
<keyword id="KW-1133">Transmembrane helix</keyword>
<keyword id="KW-0813">Transport</keyword>
<comment type="subcellular location">
    <subcellularLocation>
        <location evidence="1">Cell inner membrane</location>
        <topology evidence="1">Multi-pass membrane protein</topology>
    </subcellularLocation>
</comment>
<comment type="similarity">
    <text evidence="1">Belongs to the major facilitator superfamily. TCR/Tet family.</text>
</comment>
<protein>
    <recommendedName>
        <fullName evidence="1">Putative multidrug resistance protein MdtD</fullName>
    </recommendedName>
</protein>
<accession>B2TYA6</accession>
<sequence>MTDLPDSTRWQLWIVAFGFFMQSLDTTIVNTALPSMAQSLGESPLHMHMVIVSYVLTVAVMLPASGWLADKVGVRNIFFTAIVLFTLGSLFCALSGTLNELLLARALQGVGGAMMVPVGRLTVMKIVPREQYMAAMTFVTLPGQVGPLLGPALGGLLVEYASWHWIFLINIPVGIIGAIATLLLMPNYTMQTRRFDLSGFLLLAVGMAVLTLALDGSKGTGLSPLTIAGLVAVGVVALVLYLLHARNNNRALFSLKLFRTRTFSLGLAGSFAGRIGSGMLPFMTPVFLQIGLGFSPFHAGLMMIPMVLGSMGMKRIVVQVVNRFGYRRVLVATTLGLSLVTLLFMTTALLGWYYVLPFVLFLQGMVNSTRFSSMNTLTLKDLPDNLASSGNSLLSMIMQLSMSIGVTIAGLLLGLFGSQHVSVDSGTTQTVFMYTWLSMALIIALPAFIFARVPNDTHQNVAISRRKRSAQ</sequence>
<name>MDTD_SHIB3</name>
<evidence type="ECO:0000255" key="1">
    <source>
        <dbReference type="HAMAP-Rule" id="MF_01577"/>
    </source>
</evidence>
<feature type="chain" id="PRO_0000365291" description="Putative multidrug resistance protein MdtD">
    <location>
        <begin position="1"/>
        <end position="471"/>
    </location>
</feature>
<feature type="topological domain" description="Periplasmic" evidence="1">
    <location>
        <begin position="1"/>
        <end position="11"/>
    </location>
</feature>
<feature type="transmembrane region" description="Helical" evidence="1">
    <location>
        <begin position="12"/>
        <end position="32"/>
    </location>
</feature>
<feature type="topological domain" description="Cytoplasmic" evidence="1">
    <location>
        <begin position="33"/>
        <end position="48"/>
    </location>
</feature>
<feature type="transmembrane region" description="Helical" evidence="1">
    <location>
        <begin position="49"/>
        <end position="69"/>
    </location>
</feature>
<feature type="topological domain" description="Periplasmic" evidence="1">
    <location>
        <begin position="70"/>
        <end position="76"/>
    </location>
</feature>
<feature type="transmembrane region" description="Helical" evidence="1">
    <location>
        <begin position="77"/>
        <end position="97"/>
    </location>
</feature>
<feature type="topological domain" description="Cytoplasmic" evidence="1">
    <location>
        <begin position="98"/>
        <end position="101"/>
    </location>
</feature>
<feature type="transmembrane region" description="Helical" evidence="1">
    <location>
        <begin position="102"/>
        <end position="124"/>
    </location>
</feature>
<feature type="topological domain" description="Periplasmic" evidence="1">
    <location>
        <begin position="125"/>
        <end position="137"/>
    </location>
</feature>
<feature type="transmembrane region" description="Helical" evidence="1">
    <location>
        <begin position="138"/>
        <end position="158"/>
    </location>
</feature>
<feature type="topological domain" description="Cytoplasmic" evidence="1">
    <location>
        <begin position="159"/>
        <end position="164"/>
    </location>
</feature>
<feature type="transmembrane region" description="Helical" evidence="1">
    <location>
        <begin position="165"/>
        <end position="185"/>
    </location>
</feature>
<feature type="topological domain" description="Periplasmic" evidence="1">
    <location>
        <begin position="186"/>
        <end position="196"/>
    </location>
</feature>
<feature type="transmembrane region" description="Helical" evidence="1">
    <location>
        <begin position="197"/>
        <end position="217"/>
    </location>
</feature>
<feature type="topological domain" description="Cytoplasmic" evidence="1">
    <location>
        <begin position="218"/>
        <end position="224"/>
    </location>
</feature>
<feature type="transmembrane region" description="Helical" evidence="1">
    <location>
        <begin position="225"/>
        <end position="245"/>
    </location>
</feature>
<feature type="topological domain" description="Periplasmic" evidence="1">
    <location>
        <begin position="246"/>
        <end position="262"/>
    </location>
</feature>
<feature type="transmembrane region" description="Helical" evidence="1">
    <location>
        <begin position="263"/>
        <end position="283"/>
    </location>
</feature>
<feature type="topological domain" description="Cytoplasmic" evidence="1">
    <location>
        <begin position="284"/>
        <end position="285"/>
    </location>
</feature>
<feature type="transmembrane region" description="Helical" evidence="1">
    <location>
        <begin position="286"/>
        <end position="306"/>
    </location>
</feature>
<feature type="topological domain" description="Periplasmic" evidence="1">
    <location>
        <begin position="307"/>
        <end position="341"/>
    </location>
</feature>
<feature type="transmembrane region" description="Helical" evidence="1">
    <location>
        <begin position="342"/>
        <end position="362"/>
    </location>
</feature>
<feature type="topological domain" description="Cytoplasmic" evidence="1">
    <location>
        <begin position="363"/>
        <end position="395"/>
    </location>
</feature>
<feature type="transmembrane region" description="Helical" evidence="1">
    <location>
        <begin position="396"/>
        <end position="416"/>
    </location>
</feature>
<feature type="topological domain" description="Periplasmic" evidence="1">
    <location>
        <begin position="417"/>
        <end position="430"/>
    </location>
</feature>
<feature type="transmembrane region" description="Helical" evidence="1">
    <location>
        <begin position="431"/>
        <end position="451"/>
    </location>
</feature>
<feature type="topological domain" description="Cytoplasmic" evidence="1">
    <location>
        <begin position="452"/>
        <end position="471"/>
    </location>
</feature>
<reference key="1">
    <citation type="submission" date="2008-05" db="EMBL/GenBank/DDBJ databases">
        <title>Complete sequence of Shigella boydii serotype 18 strain BS512.</title>
        <authorList>
            <person name="Rasko D.A."/>
            <person name="Rosovitz M."/>
            <person name="Maurelli A.T."/>
            <person name="Myers G."/>
            <person name="Seshadri R."/>
            <person name="Cer R."/>
            <person name="Jiang L."/>
            <person name="Ravel J."/>
            <person name="Sebastian Y."/>
        </authorList>
    </citation>
    <scope>NUCLEOTIDE SEQUENCE [LARGE SCALE GENOMIC DNA]</scope>
    <source>
        <strain>CDC 3083-94 / BS512</strain>
    </source>
</reference>
<proteinExistence type="inferred from homology"/>
<dbReference type="EMBL" id="CP001063">
    <property type="protein sequence ID" value="ACD09037.1"/>
    <property type="molecule type" value="Genomic_DNA"/>
</dbReference>
<dbReference type="RefSeq" id="WP_000130850.1">
    <property type="nucleotide sequence ID" value="NC_010658.1"/>
</dbReference>
<dbReference type="SMR" id="B2TYA6"/>
<dbReference type="STRING" id="344609.SbBS512_E1156"/>
<dbReference type="KEGG" id="sbc:SbBS512_E1156"/>
<dbReference type="HOGENOM" id="CLU_000960_28_0_6"/>
<dbReference type="Proteomes" id="UP000001030">
    <property type="component" value="Chromosome"/>
</dbReference>
<dbReference type="GO" id="GO:0005886">
    <property type="term" value="C:plasma membrane"/>
    <property type="evidence" value="ECO:0007669"/>
    <property type="project" value="UniProtKB-SubCell"/>
</dbReference>
<dbReference type="GO" id="GO:0022857">
    <property type="term" value="F:transmembrane transporter activity"/>
    <property type="evidence" value="ECO:0007669"/>
    <property type="project" value="UniProtKB-UniRule"/>
</dbReference>
<dbReference type="CDD" id="cd17503">
    <property type="entry name" value="MFS_LmrB_MDR_like"/>
    <property type="match status" value="1"/>
</dbReference>
<dbReference type="FunFam" id="1.20.1250.20:FF:000021">
    <property type="entry name" value="Putative multidrug resistance protein MdtD"/>
    <property type="match status" value="1"/>
</dbReference>
<dbReference type="FunFam" id="1.20.1720.10:FF:000001">
    <property type="entry name" value="Putative multidrug resistance protein MdtD"/>
    <property type="match status" value="1"/>
</dbReference>
<dbReference type="Gene3D" id="1.20.1250.20">
    <property type="entry name" value="MFS general substrate transporter like domains"/>
    <property type="match status" value="1"/>
</dbReference>
<dbReference type="Gene3D" id="1.20.1720.10">
    <property type="entry name" value="Multidrug resistance protein D"/>
    <property type="match status" value="1"/>
</dbReference>
<dbReference type="HAMAP" id="MF_01577">
    <property type="entry name" value="MFS_MdtD"/>
    <property type="match status" value="1"/>
</dbReference>
<dbReference type="InterPro" id="IPR004638">
    <property type="entry name" value="EmrB-like"/>
</dbReference>
<dbReference type="InterPro" id="IPR011701">
    <property type="entry name" value="MFS"/>
</dbReference>
<dbReference type="InterPro" id="IPR020846">
    <property type="entry name" value="MFS_dom"/>
</dbReference>
<dbReference type="InterPro" id="IPR036259">
    <property type="entry name" value="MFS_trans_sf"/>
</dbReference>
<dbReference type="InterPro" id="IPR023721">
    <property type="entry name" value="Multi-R_MdtD"/>
</dbReference>
<dbReference type="NCBIfam" id="TIGR00711">
    <property type="entry name" value="efflux_EmrB"/>
    <property type="match status" value="1"/>
</dbReference>
<dbReference type="NCBIfam" id="NF007799">
    <property type="entry name" value="PRK10504.1"/>
    <property type="match status" value="1"/>
</dbReference>
<dbReference type="PANTHER" id="PTHR42718:SF46">
    <property type="entry name" value="BLR6921 PROTEIN"/>
    <property type="match status" value="1"/>
</dbReference>
<dbReference type="PANTHER" id="PTHR42718">
    <property type="entry name" value="MAJOR FACILITATOR SUPERFAMILY MULTIDRUG TRANSPORTER MFSC"/>
    <property type="match status" value="1"/>
</dbReference>
<dbReference type="Pfam" id="PF07690">
    <property type="entry name" value="MFS_1"/>
    <property type="match status" value="1"/>
</dbReference>
<dbReference type="PRINTS" id="PR01036">
    <property type="entry name" value="TCRTETB"/>
</dbReference>
<dbReference type="SUPFAM" id="SSF103473">
    <property type="entry name" value="MFS general substrate transporter"/>
    <property type="match status" value="1"/>
</dbReference>
<dbReference type="PROSITE" id="PS50850">
    <property type="entry name" value="MFS"/>
    <property type="match status" value="1"/>
</dbReference>